<reference key="1">
    <citation type="journal article" date="2007" name="Genome Biol.">
        <title>Assembly of the Candida albicans genome into sixteen supercontigs aligned on the eight chromosomes.</title>
        <authorList>
            <person name="van het Hoog M."/>
            <person name="Rast T.J."/>
            <person name="Martchenko M."/>
            <person name="Grindle S."/>
            <person name="Dignard D."/>
            <person name="Hogues H."/>
            <person name="Cuomo C."/>
            <person name="Berriman M."/>
            <person name="Scherer S."/>
            <person name="Magee B.B."/>
            <person name="Whiteway M."/>
            <person name="Chibana H."/>
            <person name="Nantel A."/>
            <person name="Magee P.T."/>
        </authorList>
    </citation>
    <scope>GENOME REANNOTATION</scope>
    <source>
        <strain>SC5314 / ATCC MYA-2876</strain>
    </source>
</reference>
<reference key="2">
    <citation type="journal article" date="2013" name="Genome Biol.">
        <title>Assembly of a phased diploid Candida albicans genome facilitates allele-specific measurements and provides a simple model for repeat and indel structure.</title>
        <authorList>
            <person name="Muzzey D."/>
            <person name="Schwartz K."/>
            <person name="Weissman J.S."/>
            <person name="Sherlock G."/>
        </authorList>
    </citation>
    <scope>NUCLEOTIDE SEQUENCE [LARGE SCALE GENOMIC DNA]</scope>
    <scope>GENOME REANNOTATION</scope>
    <source>
        <strain>SC5314 / ATCC MYA-2876</strain>
    </source>
</reference>
<reference key="3">
    <citation type="journal article" date="2004" name="Proc. Natl. Acad. Sci. U.S.A.">
        <title>The diploid genome sequence of Candida albicans.</title>
        <authorList>
            <person name="Jones T."/>
            <person name="Federspiel N.A."/>
            <person name="Chibana H."/>
            <person name="Dungan J."/>
            <person name="Kalman S."/>
            <person name="Magee B.B."/>
            <person name="Newport G."/>
            <person name="Thorstenson Y.R."/>
            <person name="Agabian N."/>
            <person name="Magee P.T."/>
            <person name="Davis R.W."/>
            <person name="Scherer S."/>
        </authorList>
    </citation>
    <scope>NUCLEOTIDE SEQUENCE [LARGE SCALE GENOMIC DNA]</scope>
    <source>
        <strain>SC5314 / ATCC MYA-2876</strain>
    </source>
</reference>
<proteinExistence type="inferred from homology"/>
<organism>
    <name type="scientific">Candida albicans (strain SC5314 / ATCC MYA-2876)</name>
    <name type="common">Yeast</name>
    <dbReference type="NCBI Taxonomy" id="237561"/>
    <lineage>
        <taxon>Eukaryota</taxon>
        <taxon>Fungi</taxon>
        <taxon>Dikarya</taxon>
        <taxon>Ascomycota</taxon>
        <taxon>Saccharomycotina</taxon>
        <taxon>Pichiomycetes</taxon>
        <taxon>Debaryomycetaceae</taxon>
        <taxon>Candida/Lodderomyces clade</taxon>
        <taxon>Candida</taxon>
    </lineage>
</organism>
<sequence length="668" mass="76701">MLKQLSRSLGIRSSPIVANLIRSKQVCTRGFHISLVKQNTSSKVNEITDITSDSLKVKEDAAGSDLPSTKTDKKSKSESFQPVKFEDFKGKGYIHDSIINSLHKNDFKELTPIQQKSLVPIFNTEKGLVCRAKTGTGKTLAFAVPTLQYAYKNRGKGVSTVVLVPTRDLAFQIEEEYRKLISHLKYNERPNLELIIGGQRTSFNPRRPAEIVIATPGRLEKELQTDRKLAKCFSNVTYRIYDEADRLLDVGFESVLNEIDGLLYKVRTTPKPIKSLLFSATVDEAISEFSKKHIHPEYEFLNTVTKDDLEIPENIHQQLIECTDGIDKVNVSLSELHGIMKQHNDYKVIVFLPTKTAVDWFYEYITNALDDELFELFSKPPRVFMLHGGRSVRQRSAALKGFKVAKKGILISTDVAARGIDVKDVTNVMQMFPSVEIADYIHKVGRTGRAGKKGKASLFATPAELPYVSLLKRKRKVKFQEVIQSEKLNSSNIIDQIESPLDSTKEFLATMVGYLQQLQSAHRLDYDSLVIENMELYRKLVRDDKAMLESRILSRIGKGISAHVKRRYFTRTRYQSHDDAEFDSYSDFSRSGMSQRPRSNDRSSKMTFNGRGKYGNNRNNDWSYQNKNRYNNNNNRQTERSYDSDRKSHNDWKYEKKFEHRRIRDHDE</sequence>
<protein>
    <recommendedName>
        <fullName>ATP-dependent RNA helicase MSS116, mitochondrial</fullName>
        <ecNumber>3.6.4.13</ecNumber>
    </recommendedName>
</protein>
<evidence type="ECO:0000250" key="1"/>
<evidence type="ECO:0000255" key="2"/>
<evidence type="ECO:0000255" key="3">
    <source>
        <dbReference type="PROSITE-ProRule" id="PRU00541"/>
    </source>
</evidence>
<evidence type="ECO:0000255" key="4">
    <source>
        <dbReference type="PROSITE-ProRule" id="PRU00542"/>
    </source>
</evidence>
<evidence type="ECO:0000256" key="5">
    <source>
        <dbReference type="SAM" id="MobiDB-lite"/>
    </source>
</evidence>
<evidence type="ECO:0000305" key="6"/>
<accession>Q5APM7</accession>
<accession>A0A1D8PEF1</accession>
<comment type="function">
    <text evidence="1">ATP-dependent RNA helicase required for mitochondrial splicing of group I and II introns. Also required for efficient mitochondrial translation (By similarity).</text>
</comment>
<comment type="catalytic activity">
    <reaction>
        <text>ATP + H2O = ADP + phosphate + H(+)</text>
        <dbReference type="Rhea" id="RHEA:13065"/>
        <dbReference type="ChEBI" id="CHEBI:15377"/>
        <dbReference type="ChEBI" id="CHEBI:15378"/>
        <dbReference type="ChEBI" id="CHEBI:30616"/>
        <dbReference type="ChEBI" id="CHEBI:43474"/>
        <dbReference type="ChEBI" id="CHEBI:456216"/>
        <dbReference type="EC" id="3.6.4.13"/>
    </reaction>
</comment>
<comment type="subcellular location">
    <subcellularLocation>
        <location evidence="1">Mitochondrion matrix</location>
    </subcellularLocation>
</comment>
<comment type="domain">
    <text>The Q motif is unique to and characteristic of the DEAD box family of RNA helicases and controls ATP binding and hydrolysis.</text>
</comment>
<comment type="similarity">
    <text evidence="6">Belongs to the DEAD box helicase family. DDX18/HAS1 subfamily.</text>
</comment>
<name>MS116_CANAL</name>
<dbReference type="EC" id="3.6.4.13"/>
<dbReference type="EMBL" id="CP017623">
    <property type="protein sequence ID" value="AOW26518.1"/>
    <property type="molecule type" value="Genomic_DNA"/>
</dbReference>
<dbReference type="RefSeq" id="XP_723426.2">
    <property type="nucleotide sequence ID" value="XM_718333.2"/>
</dbReference>
<dbReference type="SMR" id="Q5APM7"/>
<dbReference type="STRING" id="237561.Q5APM7"/>
<dbReference type="EnsemblFungi" id="C1_08810C_A-T">
    <property type="protein sequence ID" value="C1_08810C_A-T-p1"/>
    <property type="gene ID" value="C1_08810C_A"/>
</dbReference>
<dbReference type="GeneID" id="3634792"/>
<dbReference type="KEGG" id="cal:CAALFM_C108810CA"/>
<dbReference type="CGD" id="CAL0000195117">
    <property type="gene designation" value="MSS116"/>
</dbReference>
<dbReference type="VEuPathDB" id="FungiDB:C1_08810C_A"/>
<dbReference type="eggNOG" id="KOG0342">
    <property type="taxonomic scope" value="Eukaryota"/>
</dbReference>
<dbReference type="HOGENOM" id="CLU_003041_26_6_1"/>
<dbReference type="InParanoid" id="Q5APM7"/>
<dbReference type="OrthoDB" id="193716at2759"/>
<dbReference type="PRO" id="PR:Q5APM7"/>
<dbReference type="Proteomes" id="UP000000559">
    <property type="component" value="Chromosome 1"/>
</dbReference>
<dbReference type="GO" id="GO:0005759">
    <property type="term" value="C:mitochondrial matrix"/>
    <property type="evidence" value="ECO:0007669"/>
    <property type="project" value="UniProtKB-SubCell"/>
</dbReference>
<dbReference type="GO" id="GO:0005739">
    <property type="term" value="C:mitochondrion"/>
    <property type="evidence" value="ECO:0000318"/>
    <property type="project" value="GO_Central"/>
</dbReference>
<dbReference type="GO" id="GO:0005524">
    <property type="term" value="F:ATP binding"/>
    <property type="evidence" value="ECO:0007669"/>
    <property type="project" value="UniProtKB-KW"/>
</dbReference>
<dbReference type="GO" id="GO:0016887">
    <property type="term" value="F:ATP hydrolysis activity"/>
    <property type="evidence" value="ECO:0007669"/>
    <property type="project" value="RHEA"/>
</dbReference>
<dbReference type="GO" id="GO:0003723">
    <property type="term" value="F:RNA binding"/>
    <property type="evidence" value="ECO:0007669"/>
    <property type="project" value="UniProtKB-KW"/>
</dbReference>
<dbReference type="GO" id="GO:0003724">
    <property type="term" value="F:RNA helicase activity"/>
    <property type="evidence" value="ECO:0007669"/>
    <property type="project" value="UniProtKB-EC"/>
</dbReference>
<dbReference type="GO" id="GO:0006397">
    <property type="term" value="P:mRNA processing"/>
    <property type="evidence" value="ECO:0007669"/>
    <property type="project" value="UniProtKB-KW"/>
</dbReference>
<dbReference type="GO" id="GO:0006417">
    <property type="term" value="P:regulation of translation"/>
    <property type="evidence" value="ECO:0007669"/>
    <property type="project" value="UniProtKB-KW"/>
</dbReference>
<dbReference type="GO" id="GO:0008380">
    <property type="term" value="P:RNA splicing"/>
    <property type="evidence" value="ECO:0007669"/>
    <property type="project" value="UniProtKB-KW"/>
</dbReference>
<dbReference type="CDD" id="cd18787">
    <property type="entry name" value="SF2_C_DEAD"/>
    <property type="match status" value="1"/>
</dbReference>
<dbReference type="Gene3D" id="3.40.50.300">
    <property type="entry name" value="P-loop containing nucleotide triphosphate hydrolases"/>
    <property type="match status" value="2"/>
</dbReference>
<dbReference type="InterPro" id="IPR011545">
    <property type="entry name" value="DEAD/DEAH_box_helicase_dom"/>
</dbReference>
<dbReference type="InterPro" id="IPR014001">
    <property type="entry name" value="Helicase_ATP-bd"/>
</dbReference>
<dbReference type="InterPro" id="IPR001650">
    <property type="entry name" value="Helicase_C-like"/>
</dbReference>
<dbReference type="InterPro" id="IPR027417">
    <property type="entry name" value="P-loop_NTPase"/>
</dbReference>
<dbReference type="PANTHER" id="PTHR24031">
    <property type="entry name" value="RNA HELICASE"/>
    <property type="match status" value="1"/>
</dbReference>
<dbReference type="Pfam" id="PF00270">
    <property type="entry name" value="DEAD"/>
    <property type="match status" value="1"/>
</dbReference>
<dbReference type="Pfam" id="PF00271">
    <property type="entry name" value="Helicase_C"/>
    <property type="match status" value="1"/>
</dbReference>
<dbReference type="SMART" id="SM00487">
    <property type="entry name" value="DEXDc"/>
    <property type="match status" value="1"/>
</dbReference>
<dbReference type="SMART" id="SM00490">
    <property type="entry name" value="HELICc"/>
    <property type="match status" value="1"/>
</dbReference>
<dbReference type="SUPFAM" id="SSF52540">
    <property type="entry name" value="P-loop containing nucleoside triphosphate hydrolases"/>
    <property type="match status" value="1"/>
</dbReference>
<dbReference type="PROSITE" id="PS51192">
    <property type="entry name" value="HELICASE_ATP_BIND_1"/>
    <property type="match status" value="1"/>
</dbReference>
<dbReference type="PROSITE" id="PS51194">
    <property type="entry name" value="HELICASE_CTER"/>
    <property type="match status" value="1"/>
</dbReference>
<dbReference type="PROSITE" id="PS51195">
    <property type="entry name" value="Q_MOTIF"/>
    <property type="match status" value="1"/>
</dbReference>
<gene>
    <name type="primary">MSS116</name>
    <name type="ordered locus">CAALFM_C108810CA</name>
    <name type="ORF">CaO19.12201</name>
    <name type="ORF">CaO19.4739</name>
</gene>
<keyword id="KW-0067">ATP-binding</keyword>
<keyword id="KW-0347">Helicase</keyword>
<keyword id="KW-0378">Hydrolase</keyword>
<keyword id="KW-0496">Mitochondrion</keyword>
<keyword id="KW-0507">mRNA processing</keyword>
<keyword id="KW-0508">mRNA splicing</keyword>
<keyword id="KW-0547">Nucleotide-binding</keyword>
<keyword id="KW-1185">Reference proteome</keyword>
<keyword id="KW-0694">RNA-binding</keyword>
<keyword id="KW-0809">Transit peptide</keyword>
<keyword id="KW-0810">Translation regulation</keyword>
<feature type="transit peptide" description="Mitochondrion" evidence="2">
    <location>
        <begin position="1"/>
        <end position="38"/>
    </location>
</feature>
<feature type="chain" id="PRO_0000294628" description="ATP-dependent RNA helicase MSS116, mitochondrial">
    <location>
        <begin position="39"/>
        <end position="668"/>
    </location>
</feature>
<feature type="domain" description="Helicase ATP-binding" evidence="3">
    <location>
        <begin position="119"/>
        <end position="300"/>
    </location>
</feature>
<feature type="domain" description="Helicase C-terminal" evidence="4">
    <location>
        <begin position="332"/>
        <end position="501"/>
    </location>
</feature>
<feature type="region of interest" description="Disordered" evidence="5">
    <location>
        <begin position="585"/>
        <end position="668"/>
    </location>
</feature>
<feature type="short sequence motif" description="Q motif">
    <location>
        <begin position="87"/>
        <end position="115"/>
    </location>
</feature>
<feature type="short sequence motif" description="DEAD box">
    <location>
        <begin position="242"/>
        <end position="245"/>
    </location>
</feature>
<feature type="compositionally biased region" description="Polar residues" evidence="5">
    <location>
        <begin position="586"/>
        <end position="597"/>
    </location>
</feature>
<feature type="compositionally biased region" description="Low complexity" evidence="5">
    <location>
        <begin position="609"/>
        <end position="636"/>
    </location>
</feature>
<feature type="compositionally biased region" description="Basic and acidic residues" evidence="5">
    <location>
        <begin position="637"/>
        <end position="668"/>
    </location>
</feature>
<feature type="binding site" evidence="3">
    <location>
        <begin position="132"/>
        <end position="139"/>
    </location>
    <ligand>
        <name>ATP</name>
        <dbReference type="ChEBI" id="CHEBI:30616"/>
    </ligand>
</feature>